<sequence length="385" mass="43506">MLKTQKDKKLENFFSSNNKTKKKKNIIVGLSGGVDSSLSAALLVERGWNVEGLTLWLIKGQGSCCSEGLVDAAGLCEDLGINHKIIDSREIFEREVIKKTTESYEKGFTPLPCSMCNKNVKFEEMLNYAVNKKDFTHIATGHYARIKKSSYAETLDCKSFKFKDFLLLRGADENKDQSYFLYSLSQEVLSRLEFPLGEMKKEETRKEALRLGLRTAQKPESQDLCLVEHYGSMQRFIDKHIEPKEGEIVHVNGKVLGTHNGIQHFTIGQRKGLGIAWPDPLYVKSLDRVKNIVYVADKSDLFNREAIITKVNWVSIEEPKQEIEVEAQIRYRSHPVKGTLIPLKNFDNPTTTFKLIFEESQSSVTPGQAAVFYKGEILLGGGLIS</sequence>
<feature type="chain" id="PRO_0000349746" description="tRNA-specific 2-thiouridylase MnmA">
    <location>
        <begin position="1"/>
        <end position="385"/>
    </location>
</feature>
<feature type="region of interest" description="Interaction with tRNA" evidence="1">
    <location>
        <begin position="175"/>
        <end position="177"/>
    </location>
</feature>
<feature type="region of interest" description="Interaction with tRNA" evidence="1">
    <location>
        <begin position="330"/>
        <end position="331"/>
    </location>
</feature>
<feature type="active site" description="Nucleophile" evidence="1">
    <location>
        <position position="116"/>
    </location>
</feature>
<feature type="active site" description="Cysteine persulfide intermediate" evidence="1">
    <location>
        <position position="225"/>
    </location>
</feature>
<feature type="binding site" evidence="1">
    <location>
        <begin position="29"/>
        <end position="36"/>
    </location>
    <ligand>
        <name>ATP</name>
        <dbReference type="ChEBI" id="CHEBI:30616"/>
    </ligand>
</feature>
<feature type="binding site" evidence="1">
    <location>
        <position position="55"/>
    </location>
    <ligand>
        <name>ATP</name>
        <dbReference type="ChEBI" id="CHEBI:30616"/>
    </ligand>
</feature>
<feature type="binding site" evidence="1">
    <location>
        <position position="141"/>
    </location>
    <ligand>
        <name>ATP</name>
        <dbReference type="ChEBI" id="CHEBI:30616"/>
    </ligand>
</feature>
<feature type="site" description="Interaction with tRNA" evidence="1">
    <location>
        <position position="142"/>
    </location>
</feature>
<feature type="site" description="Interaction with tRNA" evidence="1">
    <location>
        <position position="368"/>
    </location>
</feature>
<feature type="disulfide bond" description="Alternate" evidence="1">
    <location>
        <begin position="116"/>
        <end position="225"/>
    </location>
</feature>
<proteinExistence type="inferred from homology"/>
<evidence type="ECO:0000255" key="1">
    <source>
        <dbReference type="HAMAP-Rule" id="MF_00144"/>
    </source>
</evidence>
<comment type="function">
    <text evidence="1">Catalyzes the 2-thiolation of uridine at the wobble position (U34) of tRNA, leading to the formation of s(2)U34.</text>
</comment>
<comment type="catalytic activity">
    <reaction evidence="1">
        <text>S-sulfanyl-L-cysteinyl-[protein] + uridine(34) in tRNA + AH2 + ATP = 2-thiouridine(34) in tRNA + L-cysteinyl-[protein] + A + AMP + diphosphate + H(+)</text>
        <dbReference type="Rhea" id="RHEA:47032"/>
        <dbReference type="Rhea" id="RHEA-COMP:10131"/>
        <dbReference type="Rhea" id="RHEA-COMP:11726"/>
        <dbReference type="Rhea" id="RHEA-COMP:11727"/>
        <dbReference type="Rhea" id="RHEA-COMP:11728"/>
        <dbReference type="ChEBI" id="CHEBI:13193"/>
        <dbReference type="ChEBI" id="CHEBI:15378"/>
        <dbReference type="ChEBI" id="CHEBI:17499"/>
        <dbReference type="ChEBI" id="CHEBI:29950"/>
        <dbReference type="ChEBI" id="CHEBI:30616"/>
        <dbReference type="ChEBI" id="CHEBI:33019"/>
        <dbReference type="ChEBI" id="CHEBI:61963"/>
        <dbReference type="ChEBI" id="CHEBI:65315"/>
        <dbReference type="ChEBI" id="CHEBI:87170"/>
        <dbReference type="ChEBI" id="CHEBI:456215"/>
        <dbReference type="EC" id="2.8.1.13"/>
    </reaction>
</comment>
<comment type="subcellular location">
    <subcellularLocation>
        <location evidence="1">Cytoplasm</location>
    </subcellularLocation>
</comment>
<comment type="similarity">
    <text evidence="1">Belongs to the MnmA/TRMU family.</text>
</comment>
<keyword id="KW-0067">ATP-binding</keyword>
<keyword id="KW-0963">Cytoplasm</keyword>
<keyword id="KW-1015">Disulfide bond</keyword>
<keyword id="KW-0547">Nucleotide-binding</keyword>
<keyword id="KW-1185">Reference proteome</keyword>
<keyword id="KW-0694">RNA-binding</keyword>
<keyword id="KW-0808">Transferase</keyword>
<keyword id="KW-0819">tRNA processing</keyword>
<keyword id="KW-0820">tRNA-binding</keyword>
<dbReference type="EC" id="2.8.1.13" evidence="1"/>
<dbReference type="EMBL" id="CP000576">
    <property type="protein sequence ID" value="ABO18099.1"/>
    <property type="molecule type" value="Genomic_DNA"/>
</dbReference>
<dbReference type="RefSeq" id="WP_011863406.1">
    <property type="nucleotide sequence ID" value="NC_009091.1"/>
</dbReference>
<dbReference type="SMR" id="A3PEC4"/>
<dbReference type="STRING" id="167546.P9301_14761"/>
<dbReference type="KEGG" id="pmg:P9301_14761"/>
<dbReference type="eggNOG" id="COG0482">
    <property type="taxonomic scope" value="Bacteria"/>
</dbReference>
<dbReference type="HOGENOM" id="CLU_035188_0_0_3"/>
<dbReference type="OrthoDB" id="9800696at2"/>
<dbReference type="Proteomes" id="UP000001430">
    <property type="component" value="Chromosome"/>
</dbReference>
<dbReference type="GO" id="GO:0005737">
    <property type="term" value="C:cytoplasm"/>
    <property type="evidence" value="ECO:0007669"/>
    <property type="project" value="UniProtKB-SubCell"/>
</dbReference>
<dbReference type="GO" id="GO:0005524">
    <property type="term" value="F:ATP binding"/>
    <property type="evidence" value="ECO:0007669"/>
    <property type="project" value="UniProtKB-KW"/>
</dbReference>
<dbReference type="GO" id="GO:0000049">
    <property type="term" value="F:tRNA binding"/>
    <property type="evidence" value="ECO:0007669"/>
    <property type="project" value="UniProtKB-KW"/>
</dbReference>
<dbReference type="GO" id="GO:0103016">
    <property type="term" value="F:tRNA-uridine 2-sulfurtransferase activity"/>
    <property type="evidence" value="ECO:0007669"/>
    <property type="project" value="UniProtKB-EC"/>
</dbReference>
<dbReference type="GO" id="GO:0002143">
    <property type="term" value="P:tRNA wobble position uridine thiolation"/>
    <property type="evidence" value="ECO:0007669"/>
    <property type="project" value="TreeGrafter"/>
</dbReference>
<dbReference type="CDD" id="cd01998">
    <property type="entry name" value="MnmA_TRMU-like"/>
    <property type="match status" value="1"/>
</dbReference>
<dbReference type="FunFam" id="2.30.30.280:FF:000001">
    <property type="entry name" value="tRNA-specific 2-thiouridylase MnmA"/>
    <property type="match status" value="1"/>
</dbReference>
<dbReference type="Gene3D" id="2.30.30.280">
    <property type="entry name" value="Adenine nucleotide alpha hydrolases-like domains"/>
    <property type="match status" value="1"/>
</dbReference>
<dbReference type="Gene3D" id="3.40.50.620">
    <property type="entry name" value="HUPs"/>
    <property type="match status" value="1"/>
</dbReference>
<dbReference type="Gene3D" id="2.40.30.10">
    <property type="entry name" value="Translation factors"/>
    <property type="match status" value="1"/>
</dbReference>
<dbReference type="HAMAP" id="MF_00144">
    <property type="entry name" value="tRNA_thiouridyl_MnmA"/>
    <property type="match status" value="1"/>
</dbReference>
<dbReference type="InterPro" id="IPR004506">
    <property type="entry name" value="MnmA-like"/>
</dbReference>
<dbReference type="InterPro" id="IPR046885">
    <property type="entry name" value="MnmA-like_C"/>
</dbReference>
<dbReference type="InterPro" id="IPR046884">
    <property type="entry name" value="MnmA-like_central"/>
</dbReference>
<dbReference type="InterPro" id="IPR023382">
    <property type="entry name" value="MnmA-like_central_sf"/>
</dbReference>
<dbReference type="InterPro" id="IPR014729">
    <property type="entry name" value="Rossmann-like_a/b/a_fold"/>
</dbReference>
<dbReference type="NCBIfam" id="NF001138">
    <property type="entry name" value="PRK00143.1"/>
    <property type="match status" value="1"/>
</dbReference>
<dbReference type="NCBIfam" id="TIGR00420">
    <property type="entry name" value="trmU"/>
    <property type="match status" value="1"/>
</dbReference>
<dbReference type="PANTHER" id="PTHR11933:SF5">
    <property type="entry name" value="MITOCHONDRIAL TRNA-SPECIFIC 2-THIOURIDYLASE 1"/>
    <property type="match status" value="1"/>
</dbReference>
<dbReference type="PANTHER" id="PTHR11933">
    <property type="entry name" value="TRNA 5-METHYLAMINOMETHYL-2-THIOURIDYLATE -METHYLTRANSFERASE"/>
    <property type="match status" value="1"/>
</dbReference>
<dbReference type="Pfam" id="PF03054">
    <property type="entry name" value="tRNA_Me_trans"/>
    <property type="match status" value="1"/>
</dbReference>
<dbReference type="Pfam" id="PF20258">
    <property type="entry name" value="tRNA_Me_trans_C"/>
    <property type="match status" value="1"/>
</dbReference>
<dbReference type="Pfam" id="PF20259">
    <property type="entry name" value="tRNA_Me_trans_M"/>
    <property type="match status" value="1"/>
</dbReference>
<dbReference type="SUPFAM" id="SSF52402">
    <property type="entry name" value="Adenine nucleotide alpha hydrolases-like"/>
    <property type="match status" value="1"/>
</dbReference>
<name>MNMA_PROM0</name>
<organism>
    <name type="scientific">Prochlorococcus marinus (strain MIT 9301)</name>
    <dbReference type="NCBI Taxonomy" id="167546"/>
    <lineage>
        <taxon>Bacteria</taxon>
        <taxon>Bacillati</taxon>
        <taxon>Cyanobacteriota</taxon>
        <taxon>Cyanophyceae</taxon>
        <taxon>Synechococcales</taxon>
        <taxon>Prochlorococcaceae</taxon>
        <taxon>Prochlorococcus</taxon>
    </lineage>
</organism>
<protein>
    <recommendedName>
        <fullName evidence="1">tRNA-specific 2-thiouridylase MnmA</fullName>
        <ecNumber evidence="1">2.8.1.13</ecNumber>
    </recommendedName>
</protein>
<gene>
    <name evidence="1" type="primary">mnmA</name>
    <name type="ordered locus">P9301_14761</name>
</gene>
<accession>A3PEC4</accession>
<reference key="1">
    <citation type="journal article" date="2007" name="PLoS Genet.">
        <title>Patterns and implications of gene gain and loss in the evolution of Prochlorococcus.</title>
        <authorList>
            <person name="Kettler G.C."/>
            <person name="Martiny A.C."/>
            <person name="Huang K."/>
            <person name="Zucker J."/>
            <person name="Coleman M.L."/>
            <person name="Rodrigue S."/>
            <person name="Chen F."/>
            <person name="Lapidus A."/>
            <person name="Ferriera S."/>
            <person name="Johnson J."/>
            <person name="Steglich C."/>
            <person name="Church G.M."/>
            <person name="Richardson P."/>
            <person name="Chisholm S.W."/>
        </authorList>
    </citation>
    <scope>NUCLEOTIDE SEQUENCE [LARGE SCALE GENOMIC DNA]</scope>
    <source>
        <strain>MIT 9301</strain>
    </source>
</reference>